<organism>
    <name type="scientific">Homo sapiens</name>
    <name type="common">Human</name>
    <dbReference type="NCBI Taxonomy" id="9606"/>
    <lineage>
        <taxon>Eukaryota</taxon>
        <taxon>Metazoa</taxon>
        <taxon>Chordata</taxon>
        <taxon>Craniata</taxon>
        <taxon>Vertebrata</taxon>
        <taxon>Euteleostomi</taxon>
        <taxon>Mammalia</taxon>
        <taxon>Eutheria</taxon>
        <taxon>Euarchontoglires</taxon>
        <taxon>Primates</taxon>
        <taxon>Haplorrhini</taxon>
        <taxon>Catarrhini</taxon>
        <taxon>Hominidae</taxon>
        <taxon>Homo</taxon>
    </lineage>
</organism>
<accession>Q14116</accession>
<accession>O75599</accession>
<accession>Q6FGY3</accession>
<accession>Q6WWJ7</accession>
<feature type="propeptide" id="PRO_0000015343" evidence="11">
    <location>
        <begin position="1"/>
        <end position="36"/>
    </location>
</feature>
<feature type="chain" id="PRO_0000015344" description="Interleukin-18">
    <location>
        <begin position="37"/>
        <end position="193"/>
    </location>
</feature>
<feature type="site" description="Cleavage; by CASP1, CASP4 and CASP5" evidence="5 9 10 11">
    <location>
        <begin position="36"/>
        <end position="37"/>
    </location>
</feature>
<feature type="site" description="Cleavage; by CASP3" evidence="10 11">
    <location>
        <begin position="71"/>
        <end position="72"/>
    </location>
</feature>
<feature type="splice variant" id="VSP_044934" description="In isoform 2." evidence="13">
    <location>
        <begin position="27"/>
        <end position="30"/>
    </location>
</feature>
<feature type="mutagenesis site" description="Strongly decreased processing by CASP4 or CASP5; when associated with A-28." evidence="10">
    <original>N</original>
    <variation>A</variation>
    <location>
        <position position="12"/>
    </location>
</feature>
<feature type="mutagenesis site" description="Strongly decreased processing by CASP4 or CASP5; when associated with A-12." evidence="10">
    <original>E</original>
    <variation>A</variation>
    <location>
        <position position="28"/>
    </location>
</feature>
<feature type="mutagenesis site" description="Abolished processing by CASP1, CASP4 or CASP5 and maturation." evidence="9 10">
    <original>LES</original>
    <variation>AAA</variation>
    <location>
        <begin position="33"/>
        <end position="35"/>
    </location>
</feature>
<feature type="mutagenesis site" description="Abolished processing by CASP1 or CASP4 or CASP5 and maturation." evidence="10">
    <original>D</original>
    <variation>A</variation>
    <location>
        <position position="36"/>
    </location>
</feature>
<feature type="mutagenesis site" description="Does not strongly affect cleavage by CASP4." evidence="10">
    <original>YF</original>
    <variation>AA</variation>
    <location>
        <begin position="37"/>
        <end position="38"/>
    </location>
</feature>
<feature type="mutagenesis site" description="Abolished ability to bind the IL18R1 receptor without affecting its processing by CASP4." evidence="10">
    <original>F</original>
    <variation>D</variation>
    <location>
        <position position="38"/>
    </location>
</feature>
<feature type="mutagenesis site" description="Reduces binding to IL18R1 and the ability to induce IFNG production." evidence="2">
    <original>K</original>
    <variation>A</variation>
    <location>
        <position position="40"/>
    </location>
</feature>
<feature type="mutagenesis site" description="Impairs binding to IL18R1 and the ability to induce IFNG production." evidence="2">
    <original>L</original>
    <variation>A</variation>
    <location>
        <position position="41"/>
    </location>
</feature>
<feature type="mutagenesis site" description="Reduces binding to IL18R1 and the ability to induce IFNG production." evidence="2">
    <original>K</original>
    <variation>A</variation>
    <location>
        <position position="44"/>
    </location>
</feature>
<feature type="mutagenesis site" description="Decreased binding to CASP4." evidence="9">
    <original>VI</original>
    <variation>NN</variation>
    <location>
        <begin position="47"/>
        <end position="48"/>
    </location>
</feature>
<feature type="mutagenesis site" description="Reduces binding to IL18R1 and the ability to induce IFNG production." evidence="2">
    <original>R</original>
    <variation>A</variation>
    <location>
        <position position="49"/>
    </location>
</feature>
<feature type="mutagenesis site" description="Reduces binding to IL18R1 and the ability to induce IFNG production." evidence="2">
    <original>D</original>
    <variation>A</variation>
    <location>
        <position position="53"/>
    </location>
</feature>
<feature type="mutagenesis site" description="Impairs binding to IL18R1 and the ability to induce IFNG production." evidence="2">
    <original>M</original>
    <variation>A</variation>
    <location>
        <position position="69"/>
    </location>
</feature>
<feature type="mutagenesis site" description="Abolished ability to bind the IL18R1 receptor without affecting its processing by CASP4." evidence="10">
    <location>
        <begin position="70"/>
        <end position="77"/>
    </location>
</feature>
<feature type="mutagenesis site" description="Impairs binding to IL18R1 and the ability to induce IFNG production. Abolished cleavage by CASP3." evidence="2 10">
    <original>D</original>
    <variation>A</variation>
    <location>
        <position position="71"/>
    </location>
</feature>
<feature type="mutagenesis site" description="Impairs binding to IL18R1 and the ability to induce IFNG production." evidence="2">
    <original>R</original>
    <variation>A</variation>
    <location>
        <position position="94"/>
    </location>
</feature>
<feature type="mutagenesis site" description="Impairs binding to IL18R1 and the ability to induce IFNG production." evidence="2">
    <original>M</original>
    <variation>A</variation>
    <location>
        <position position="96"/>
    </location>
</feature>
<feature type="mutagenesis site" description="Reduces binding of the preformed binary complex of IL18 and IL18R1 to IL18RAP resulting in impaired IFNG production." evidence="2">
    <original>K</original>
    <variation>A</variation>
    <location>
        <position position="115"/>
    </location>
</feature>
<feature type="mutagenesis site" description="Reduces binding of the preformed binary complex of IL18 and IL18R1 to IL18RAP resulting in impaired IFNG production." evidence="2">
    <original>K</original>
    <variation>A</variation>
    <location>
        <position position="120"/>
    </location>
</feature>
<feature type="mutagenesis site" description="Reduces binding of the preformed binary complex of IL18 and IL18R1 to IL18RAP resulting in impaired IFNG production." evidence="2">
    <original>D</original>
    <variation>A</variation>
    <location>
        <position position="134"/>
    </location>
</feature>
<feature type="mutagenesis site" description="Reduces binding to IL18R1 and the ability to induce IFNG production." evidence="2">
    <original>R</original>
    <variation>A</variation>
    <location>
        <position position="140"/>
    </location>
</feature>
<feature type="mutagenesis site" description="Abolishes binding of the preformed binary complex of IL18 and IL18R1 to IL18RAP." evidence="6">
    <original>G</original>
    <variation>A</variation>
    <location>
        <position position="144"/>
    </location>
</feature>
<feature type="mutagenesis site" description="Abolishes binding of the preformed binary complex of IL18 and IL18R1 to IL18RAP." evidence="6">
    <original>H</original>
    <variation>A</variation>
    <location>
        <position position="145"/>
    </location>
</feature>
<feature type="mutagenesis site" description="Reduces binding of the preformed binary complex of IL18 and IL18R1 to IL18RAP." evidence="6">
    <original>D</original>
    <variation>A</variation>
    <location>
        <position position="146"/>
    </location>
</feature>
<feature type="mutagenesis site" description="Abolishes binding of the preformed binary complex of IL18 and IL18R1 to IL18RAP." evidence="6">
    <original>K</original>
    <variation>A</variation>
    <location>
        <position position="148"/>
    </location>
</feature>
<feature type="mutagenesis site" description="Reduces binding to IL18R1 and the ability to induce IFNG production." evidence="2">
    <original>D</original>
    <variation>A</variation>
    <location>
        <position position="168"/>
    </location>
</feature>
<feature type="mutagenesis site" description="Reduces binding of the preformed binary complex of IL18 and IL18R1 to IL18RAP." evidence="6">
    <original>R</original>
    <variation>A</variation>
    <location>
        <position position="183"/>
    </location>
</feature>
<feature type="mutagenesis site" description="Reduces binding of the preformed binary complex of IL18 and IL18R1 to IL18RAP." evidence="6">
    <original>M</original>
    <variation>A</variation>
    <location>
        <position position="186"/>
    </location>
</feature>
<feature type="mutagenesis site" description="Decreased binding to Casp4/Casp11." evidence="9">
    <original>ED</original>
    <variation>KK</variation>
    <location>
        <begin position="192"/>
        <end position="193"/>
    </location>
</feature>
<feature type="sequence conflict" description="In Ref. 3; AAC27787." evidence="16" ref="3">
    <original>F</original>
    <variation>L</variation>
    <location>
        <position position="66"/>
    </location>
</feature>
<feature type="sequence conflict" description="In Ref. 3; AAC27787." evidence="16" ref="3">
    <original>S</original>
    <variation>R</variation>
    <location>
        <position position="86"/>
    </location>
</feature>
<feature type="sequence conflict" description="In Ref. 3; AAC27787." evidence="16" ref="3">
    <original>N</original>
    <variation>S</variation>
    <location>
        <position position="191"/>
    </location>
</feature>
<feature type="strand" evidence="22">
    <location>
        <begin position="23"/>
        <end position="25"/>
    </location>
</feature>
<feature type="strand" evidence="22">
    <location>
        <begin position="31"/>
        <end position="39"/>
    </location>
</feature>
<feature type="strand" evidence="20">
    <location>
        <begin position="42"/>
        <end position="49"/>
    </location>
</feature>
<feature type="strand" evidence="20">
    <location>
        <begin position="55"/>
        <end position="58"/>
    </location>
</feature>
<feature type="strand" evidence="20">
    <location>
        <begin position="64"/>
        <end position="67"/>
    </location>
</feature>
<feature type="helix" evidence="20">
    <location>
        <begin position="71"/>
        <end position="76"/>
    </location>
</feature>
<feature type="turn" evidence="20">
    <location>
        <begin position="77"/>
        <end position="81"/>
    </location>
</feature>
<feature type="strand" evidence="20">
    <location>
        <begin position="83"/>
        <end position="91"/>
    </location>
</feature>
<feature type="turn" evidence="20">
    <location>
        <begin position="92"/>
        <end position="94"/>
    </location>
</feature>
<feature type="strand" evidence="20">
    <location>
        <begin position="95"/>
        <end position="111"/>
    </location>
</feature>
<feature type="helix" evidence="20">
    <location>
        <begin position="113"/>
        <end position="115"/>
    </location>
</feature>
<feature type="strand" evidence="20">
    <location>
        <begin position="118"/>
        <end position="121"/>
    </location>
</feature>
<feature type="strand" evidence="20">
    <location>
        <begin position="126"/>
        <end position="131"/>
    </location>
</feature>
<feature type="strand" evidence="20">
    <location>
        <begin position="137"/>
        <end position="142"/>
    </location>
</feature>
<feature type="strand" evidence="20">
    <location>
        <begin position="145"/>
        <end position="156"/>
    </location>
</feature>
<feature type="strand" evidence="20">
    <location>
        <begin position="159"/>
        <end position="166"/>
    </location>
</feature>
<feature type="strand" evidence="20">
    <location>
        <begin position="169"/>
        <end position="176"/>
    </location>
</feature>
<feature type="turn" evidence="21">
    <location>
        <begin position="178"/>
        <end position="180"/>
    </location>
</feature>
<feature type="helix" evidence="20">
    <location>
        <begin position="183"/>
        <end position="185"/>
    </location>
</feature>
<feature type="strand" evidence="20">
    <location>
        <begin position="187"/>
        <end position="191"/>
    </location>
</feature>
<protein>
    <recommendedName>
        <fullName evidence="12 14 15">Interleukin-18</fullName>
        <shortName evidence="12 14 15">IL-18</shortName>
    </recommendedName>
    <alternativeName>
        <fullName>Iboctadekin</fullName>
    </alternativeName>
    <alternativeName>
        <fullName evidence="12 15">Interferon gamma-inducing factor</fullName>
        <shortName evidence="12 15">IFN-gamma-inducing factor</shortName>
    </alternativeName>
    <alternativeName>
        <fullName>Interleukin-1 gamma</fullName>
        <shortName>IL-1 gamma</shortName>
    </alternativeName>
</protein>
<sequence length="193" mass="22326">MAAEPVEDNCINFVAMKFIDNTLYFIAEDDENLESDYFGKLESKLSVIRNLNDQVLFIDQGNRPLFEDMTDSDCRDNAPRTIFIISMYKDSQPRGMAVTISVKCEKISTLSCENKIISFKEMNPPDNIKDTKSDIIFFQRSVPGHDNKMQFESSSYEGYFLACEKERDLFKLILKKEDELGDRSIMFTVQNED</sequence>
<dbReference type="EMBL" id="D49950">
    <property type="protein sequence ID" value="BAA08706.1"/>
    <property type="molecule type" value="mRNA"/>
</dbReference>
<dbReference type="EMBL" id="AY266351">
    <property type="protein sequence ID" value="AAP92112.1"/>
    <property type="molecule type" value="mRNA"/>
</dbReference>
<dbReference type="EMBL" id="AF077611">
    <property type="protein sequence ID" value="AAC27787.1"/>
    <property type="molecule type" value="mRNA"/>
</dbReference>
<dbReference type="EMBL" id="AY044641">
    <property type="protein sequence ID" value="AAK95950.1"/>
    <property type="molecule type" value="mRNA"/>
</dbReference>
<dbReference type="EMBL" id="CR541973">
    <property type="protein sequence ID" value="CAG46771.1"/>
    <property type="molecule type" value="mRNA"/>
</dbReference>
<dbReference type="EMBL" id="CR542001">
    <property type="protein sequence ID" value="CAG46798.1"/>
    <property type="molecule type" value="mRNA"/>
</dbReference>
<dbReference type="EMBL" id="AP002007">
    <property type="status" value="NOT_ANNOTATED_CDS"/>
    <property type="molecule type" value="Genomic_DNA"/>
</dbReference>
<dbReference type="EMBL" id="AP002884">
    <property type="status" value="NOT_ANNOTATED_CDS"/>
    <property type="molecule type" value="Genomic_DNA"/>
</dbReference>
<dbReference type="EMBL" id="CH471065">
    <property type="protein sequence ID" value="EAW67184.1"/>
    <property type="molecule type" value="Genomic_DNA"/>
</dbReference>
<dbReference type="EMBL" id="BC007007">
    <property type="protein sequence ID" value="AAH07007.1"/>
    <property type="molecule type" value="mRNA"/>
</dbReference>
<dbReference type="EMBL" id="BC007461">
    <property type="protein sequence ID" value="AAH07461.1"/>
    <property type="molecule type" value="mRNA"/>
</dbReference>
<dbReference type="EMBL" id="U90434">
    <property type="protein sequence ID" value="AAB50010.1"/>
    <property type="molecule type" value="mRNA"/>
</dbReference>
<dbReference type="CCDS" id="CCDS44731.1">
    <molecule id="Q14116-1"/>
</dbReference>
<dbReference type="CCDS" id="CCDS58180.1">
    <molecule id="Q14116-2"/>
</dbReference>
<dbReference type="RefSeq" id="NP_001230140.1">
    <molecule id="Q14116-2"/>
    <property type="nucleotide sequence ID" value="NM_001243211.2"/>
</dbReference>
<dbReference type="RefSeq" id="NP_001373349.1">
    <molecule id="Q14116-1"/>
    <property type="nucleotide sequence ID" value="NM_001386420.1"/>
</dbReference>
<dbReference type="RefSeq" id="NP_001553.1">
    <molecule id="Q14116-1"/>
    <property type="nucleotide sequence ID" value="NM_001562.4"/>
</dbReference>
<dbReference type="RefSeq" id="XP_011541107.1">
    <molecule id="Q14116-2"/>
    <property type="nucleotide sequence ID" value="XM_011542805.2"/>
</dbReference>
<dbReference type="RefSeq" id="XP_011541108.1">
    <property type="nucleotide sequence ID" value="XM_011542806.2"/>
</dbReference>
<dbReference type="RefSeq" id="XP_054224645.1">
    <molecule id="Q14116-2"/>
    <property type="nucleotide sequence ID" value="XM_054368670.1"/>
</dbReference>
<dbReference type="PDB" id="1J0S">
    <property type="method" value="NMR"/>
    <property type="chains" value="A=37-193"/>
</dbReference>
<dbReference type="PDB" id="2VXT">
    <property type="method" value="X-ray"/>
    <property type="resolution" value="1.49 A"/>
    <property type="chains" value="I=37-193"/>
</dbReference>
<dbReference type="PDB" id="3F62">
    <property type="method" value="X-ray"/>
    <property type="resolution" value="2.00 A"/>
    <property type="chains" value="B=37-193"/>
</dbReference>
<dbReference type="PDB" id="3WO2">
    <property type="method" value="X-ray"/>
    <property type="resolution" value="2.33 A"/>
    <property type="chains" value="A/B/C/D=37-193"/>
</dbReference>
<dbReference type="PDB" id="3WO3">
    <property type="method" value="X-ray"/>
    <property type="resolution" value="3.10 A"/>
    <property type="chains" value="A/C/E/G/I/K=37-193"/>
</dbReference>
<dbReference type="PDB" id="3WO4">
    <property type="method" value="X-ray"/>
    <property type="resolution" value="3.10 A"/>
    <property type="chains" value="A=37-193"/>
</dbReference>
<dbReference type="PDB" id="4EEE">
    <property type="method" value="X-ray"/>
    <property type="resolution" value="2.71 A"/>
    <property type="chains" value="B/D=37-193"/>
</dbReference>
<dbReference type="PDB" id="4EKX">
    <property type="method" value="X-ray"/>
    <property type="resolution" value="1.75 A"/>
    <property type="chains" value="B/D=37-193"/>
</dbReference>
<dbReference type="PDB" id="4HJJ">
    <property type="method" value="X-ray"/>
    <property type="resolution" value="2.10 A"/>
    <property type="chains" value="A=37-192"/>
</dbReference>
<dbReference type="PDB" id="4R6U">
    <property type="method" value="X-ray"/>
    <property type="resolution" value="2.80 A"/>
    <property type="chains" value="B/D=37-193"/>
</dbReference>
<dbReference type="PDB" id="4XFS">
    <property type="method" value="X-ray"/>
    <property type="resolution" value="1.91 A"/>
    <property type="chains" value="A/B=37-193"/>
</dbReference>
<dbReference type="PDB" id="4XFT">
    <property type="method" value="X-ray"/>
    <property type="resolution" value="2.00 A"/>
    <property type="chains" value="A/B=37-193"/>
</dbReference>
<dbReference type="PDB" id="4XFU">
    <property type="method" value="X-ray"/>
    <property type="resolution" value="2.85 A"/>
    <property type="chains" value="A/B=37-193"/>
</dbReference>
<dbReference type="PDB" id="7AL7">
    <property type="method" value="X-ray"/>
    <property type="resolution" value="1.80 A"/>
    <property type="chains" value="B=36-193"/>
</dbReference>
<dbReference type="PDB" id="8J6K">
    <property type="method" value="X-ray"/>
    <property type="resolution" value="3.12 A"/>
    <property type="chains" value="B=1-193"/>
</dbReference>
<dbReference type="PDB" id="8SPB">
    <property type="method" value="EM"/>
    <property type="resolution" value="3.20 A"/>
    <property type="chains" value="C/c=6-193"/>
</dbReference>
<dbReference type="PDB" id="8SV1">
    <property type="method" value="EM"/>
    <property type="resolution" value="3.50 A"/>
    <property type="chains" value="C/c=6-193"/>
</dbReference>
<dbReference type="PDB" id="8URV">
    <property type="method" value="NMR"/>
    <property type="chains" value="A=1-193"/>
</dbReference>
<dbReference type="PDBsum" id="1J0S"/>
<dbReference type="PDBsum" id="2VXT"/>
<dbReference type="PDBsum" id="3F62"/>
<dbReference type="PDBsum" id="3WO2"/>
<dbReference type="PDBsum" id="3WO3"/>
<dbReference type="PDBsum" id="3WO4"/>
<dbReference type="PDBsum" id="4EEE"/>
<dbReference type="PDBsum" id="4EKX"/>
<dbReference type="PDBsum" id="4HJJ"/>
<dbReference type="PDBsum" id="4R6U"/>
<dbReference type="PDBsum" id="4XFS"/>
<dbReference type="PDBsum" id="4XFT"/>
<dbReference type="PDBsum" id="4XFU"/>
<dbReference type="PDBsum" id="7AL7"/>
<dbReference type="PDBsum" id="8J6K"/>
<dbReference type="PDBsum" id="8SPB"/>
<dbReference type="PDBsum" id="8SV1"/>
<dbReference type="PDBsum" id="8URV"/>
<dbReference type="EMDB" id="EMD-40678"/>
<dbReference type="EMDB" id="EMD-40781"/>
<dbReference type="SMR" id="Q14116"/>
<dbReference type="BioGRID" id="109819">
    <property type="interactions" value="33"/>
</dbReference>
<dbReference type="ComplexPortal" id="CPX-10041">
    <property type="entry name" value="Interleukin-18 receptor-ligand complex"/>
</dbReference>
<dbReference type="ComplexPortal" id="CPX-10101">
    <property type="entry name" value="Interleukin-18 decoy complex"/>
</dbReference>
<dbReference type="CORUM" id="Q14116"/>
<dbReference type="DIP" id="DIP-3785N"/>
<dbReference type="FunCoup" id="Q14116">
    <property type="interactions" value="693"/>
</dbReference>
<dbReference type="IntAct" id="Q14116">
    <property type="interactions" value="15"/>
</dbReference>
<dbReference type="MINT" id="Q14116"/>
<dbReference type="STRING" id="9606.ENSP00000280357"/>
<dbReference type="BindingDB" id="Q14116"/>
<dbReference type="ChEMBL" id="CHEMBL1741305"/>
<dbReference type="GlyGen" id="Q14116">
    <property type="glycosylation" value="1 site, 1 O-linked glycan (1 site)"/>
</dbReference>
<dbReference type="iPTMnet" id="Q14116"/>
<dbReference type="PhosphoSitePlus" id="Q14116"/>
<dbReference type="BioMuta" id="IL18"/>
<dbReference type="DMDM" id="3219817"/>
<dbReference type="OGP" id="Q14116"/>
<dbReference type="CPTAC" id="CPTAC-1249"/>
<dbReference type="CPTAC" id="CPTAC-1250"/>
<dbReference type="CPTAC" id="CPTAC-1431"/>
<dbReference type="CPTAC" id="CPTAC-1432"/>
<dbReference type="CPTAC" id="CPTAC-1433"/>
<dbReference type="CPTAC" id="CPTAC-1434"/>
<dbReference type="CPTAC" id="CPTAC-1435"/>
<dbReference type="CPTAC" id="CPTAC-5980"/>
<dbReference type="CPTAC" id="CPTAC-705"/>
<dbReference type="jPOST" id="Q14116"/>
<dbReference type="MassIVE" id="Q14116"/>
<dbReference type="PaxDb" id="9606-ENSP00000280357"/>
<dbReference type="PeptideAtlas" id="Q14116"/>
<dbReference type="ProteomicsDB" id="59823">
    <molecule id="Q14116-1"/>
</dbReference>
<dbReference type="ProteomicsDB" id="67779"/>
<dbReference type="Pumba" id="Q14116"/>
<dbReference type="ABCD" id="Q14116">
    <property type="antibodies" value="25 sequenced antibodies"/>
</dbReference>
<dbReference type="Antibodypedia" id="1287">
    <property type="antibodies" value="1001 antibodies from 48 providers"/>
</dbReference>
<dbReference type="CPTC" id="Q14116">
    <property type="antibodies" value="4 antibodies"/>
</dbReference>
<dbReference type="DNASU" id="3606"/>
<dbReference type="Ensembl" id="ENST00000280357.12">
    <molecule id="Q14116-1"/>
    <property type="protein sequence ID" value="ENSP00000280357.7"/>
    <property type="gene ID" value="ENSG00000150782.13"/>
</dbReference>
<dbReference type="Ensembl" id="ENST00000524595.6">
    <molecule id="Q14116-2"/>
    <property type="protein sequence ID" value="ENSP00000434561.1"/>
    <property type="gene ID" value="ENSG00000150782.13"/>
</dbReference>
<dbReference type="Ensembl" id="ENST00000528832.1">
    <molecule id="Q14116-1"/>
    <property type="protein sequence ID" value="ENSP00000434161.1"/>
    <property type="gene ID" value="ENSG00000150782.13"/>
</dbReference>
<dbReference type="GeneID" id="3606"/>
<dbReference type="KEGG" id="hsa:3606"/>
<dbReference type="MANE-Select" id="ENST00000280357.12">
    <property type="protein sequence ID" value="ENSP00000280357.7"/>
    <property type="RefSeq nucleotide sequence ID" value="NM_001562.4"/>
    <property type="RefSeq protein sequence ID" value="NP_001553.1"/>
</dbReference>
<dbReference type="UCSC" id="uc001pnb.2">
    <molecule id="Q14116-1"/>
    <property type="organism name" value="human"/>
</dbReference>
<dbReference type="AGR" id="HGNC:5986"/>
<dbReference type="CTD" id="3606"/>
<dbReference type="DisGeNET" id="3606"/>
<dbReference type="GeneCards" id="IL18"/>
<dbReference type="HGNC" id="HGNC:5986">
    <property type="gene designation" value="IL18"/>
</dbReference>
<dbReference type="HPA" id="ENSG00000150782">
    <property type="expression patterns" value="Tissue enhanced (esophagus, skin)"/>
</dbReference>
<dbReference type="MIM" id="600953">
    <property type="type" value="gene"/>
</dbReference>
<dbReference type="neXtProt" id="NX_Q14116"/>
<dbReference type="OpenTargets" id="ENSG00000150782"/>
<dbReference type="PharmGKB" id="PA29802"/>
<dbReference type="VEuPathDB" id="HostDB:ENSG00000150782"/>
<dbReference type="eggNOG" id="ENOG502SDJZ">
    <property type="taxonomic scope" value="Eukaryota"/>
</dbReference>
<dbReference type="GeneTree" id="ENSGT00390000001053"/>
<dbReference type="HOGENOM" id="CLU_113349_0_0_1"/>
<dbReference type="InParanoid" id="Q14116"/>
<dbReference type="OMA" id="RQFYKFE"/>
<dbReference type="OrthoDB" id="8535973at2759"/>
<dbReference type="PAN-GO" id="Q14116">
    <property type="GO annotations" value="5 GO annotations based on evolutionary models"/>
</dbReference>
<dbReference type="PhylomeDB" id="Q14116"/>
<dbReference type="TreeFam" id="TF336297"/>
<dbReference type="BioCyc" id="MetaCyc:ENSG00000150782-MONOMER"/>
<dbReference type="PathwayCommons" id="Q14116"/>
<dbReference type="Reactome" id="R-HSA-448706">
    <property type="pathway name" value="Interleukin-1 processing"/>
</dbReference>
<dbReference type="Reactome" id="R-HSA-5620971">
    <property type="pathway name" value="Pyroptosis"/>
</dbReference>
<dbReference type="Reactome" id="R-HSA-6783783">
    <property type="pathway name" value="Interleukin-10 signaling"/>
</dbReference>
<dbReference type="Reactome" id="R-HSA-6785807">
    <property type="pathway name" value="Interleukin-4 and Interleukin-13 signaling"/>
</dbReference>
<dbReference type="Reactome" id="R-HSA-9012546">
    <molecule id="Q14116-2"/>
    <property type="pathway name" value="Interleukin-18 signaling"/>
</dbReference>
<dbReference type="Reactome" id="R-HSA-9660826">
    <property type="pathway name" value="Purinergic signaling in leishmaniasis infection"/>
</dbReference>
<dbReference type="SignaLink" id="Q14116"/>
<dbReference type="SIGNOR" id="Q14116"/>
<dbReference type="BioGRID-ORCS" id="3606">
    <property type="hits" value="41 hits in 1149 CRISPR screens"/>
</dbReference>
<dbReference type="EvolutionaryTrace" id="Q14116"/>
<dbReference type="GeneWiki" id="Interleukin_18"/>
<dbReference type="GenomeRNAi" id="3606"/>
<dbReference type="Pharos" id="Q14116">
    <property type="development level" value="Tbio"/>
</dbReference>
<dbReference type="PRO" id="PR:Q14116"/>
<dbReference type="Proteomes" id="UP000005640">
    <property type="component" value="Chromosome 11"/>
</dbReference>
<dbReference type="RNAct" id="Q14116">
    <property type="molecule type" value="protein"/>
</dbReference>
<dbReference type="Bgee" id="ENSG00000150782">
    <property type="expression patterns" value="Expressed in lower esophagus mucosa and 173 other cell types or tissues"/>
</dbReference>
<dbReference type="ExpressionAtlas" id="Q14116">
    <property type="expression patterns" value="baseline and differential"/>
</dbReference>
<dbReference type="GO" id="GO:0005829">
    <property type="term" value="C:cytosol"/>
    <property type="evidence" value="ECO:0000304"/>
    <property type="project" value="Reactome"/>
</dbReference>
<dbReference type="GO" id="GO:0005576">
    <property type="term" value="C:extracellular region"/>
    <property type="evidence" value="ECO:0000304"/>
    <property type="project" value="UniProtKB"/>
</dbReference>
<dbReference type="GO" id="GO:0005615">
    <property type="term" value="C:extracellular space"/>
    <property type="evidence" value="ECO:0000314"/>
    <property type="project" value="UniProtKB"/>
</dbReference>
<dbReference type="GO" id="GO:0005125">
    <property type="term" value="F:cytokine activity"/>
    <property type="evidence" value="ECO:0000314"/>
    <property type="project" value="UniProtKB"/>
</dbReference>
<dbReference type="GO" id="GO:0045515">
    <property type="term" value="F:interleukin-18 receptor binding"/>
    <property type="evidence" value="ECO:0000314"/>
    <property type="project" value="UniProtKB"/>
</dbReference>
<dbReference type="GO" id="GO:0001525">
    <property type="term" value="P:angiogenesis"/>
    <property type="evidence" value="ECO:0000314"/>
    <property type="project" value="UniProtKB"/>
</dbReference>
<dbReference type="GO" id="GO:0008283">
    <property type="term" value="P:cell population proliferation"/>
    <property type="evidence" value="ECO:0007669"/>
    <property type="project" value="Ensembl"/>
</dbReference>
<dbReference type="GO" id="GO:0007267">
    <property type="term" value="P:cell-cell signaling"/>
    <property type="evidence" value="ECO:0000304"/>
    <property type="project" value="ProtInc"/>
</dbReference>
<dbReference type="GO" id="GO:0071222">
    <property type="term" value="P:cellular response to lipopolysaccharide"/>
    <property type="evidence" value="ECO:0000318"/>
    <property type="project" value="GO_Central"/>
</dbReference>
<dbReference type="GO" id="GO:0042632">
    <property type="term" value="P:cholesterol homeostasis"/>
    <property type="evidence" value="ECO:0000250"/>
    <property type="project" value="BHF-UCL"/>
</dbReference>
<dbReference type="GO" id="GO:0019221">
    <property type="term" value="P:cytokine-mediated signaling pathway"/>
    <property type="evidence" value="ECO:0000318"/>
    <property type="project" value="GO_Central"/>
</dbReference>
<dbReference type="GO" id="GO:0050830">
    <property type="term" value="P:defense response to Gram-positive bacterium"/>
    <property type="evidence" value="ECO:0000250"/>
    <property type="project" value="UniProtKB"/>
</dbReference>
<dbReference type="GO" id="GO:0061436">
    <property type="term" value="P:establishment of skin barrier"/>
    <property type="evidence" value="ECO:0000250"/>
    <property type="project" value="UniProtKB"/>
</dbReference>
<dbReference type="GO" id="GO:0006955">
    <property type="term" value="P:immune response"/>
    <property type="evidence" value="ECO:0000318"/>
    <property type="project" value="GO_Central"/>
</dbReference>
<dbReference type="GO" id="GO:0006954">
    <property type="term" value="P:inflammatory response"/>
    <property type="evidence" value="ECO:0000318"/>
    <property type="project" value="GO_Central"/>
</dbReference>
<dbReference type="GO" id="GO:0035655">
    <property type="term" value="P:interleukin-18-mediated signaling pathway"/>
    <property type="evidence" value="ECO:0000314"/>
    <property type="project" value="UniProtKB"/>
</dbReference>
<dbReference type="GO" id="GO:0030101">
    <property type="term" value="P:natural killer cell activation"/>
    <property type="evidence" value="ECO:0007669"/>
    <property type="project" value="Ensembl"/>
</dbReference>
<dbReference type="GO" id="GO:0042267">
    <property type="term" value="P:natural killer cell mediated cytotoxicity"/>
    <property type="evidence" value="ECO:0007669"/>
    <property type="project" value="Ensembl"/>
</dbReference>
<dbReference type="GO" id="GO:0045662">
    <property type="term" value="P:negative regulation of myoblast differentiation"/>
    <property type="evidence" value="ECO:0007669"/>
    <property type="project" value="Ensembl"/>
</dbReference>
<dbReference type="GO" id="GO:0042119">
    <property type="term" value="P:neutrophil activation"/>
    <property type="evidence" value="ECO:0007669"/>
    <property type="project" value="Ensembl"/>
</dbReference>
<dbReference type="GO" id="GO:0042104">
    <property type="term" value="P:positive regulation of activated T cell proliferation"/>
    <property type="evidence" value="ECO:0000314"/>
    <property type="project" value="UniProtKB"/>
</dbReference>
<dbReference type="GO" id="GO:0032722">
    <property type="term" value="P:positive regulation of chemokine production"/>
    <property type="evidence" value="ECO:0000304"/>
    <property type="project" value="UniProtKB"/>
</dbReference>
<dbReference type="GO" id="GO:0120162">
    <property type="term" value="P:positive regulation of cold-induced thermogenesis"/>
    <property type="evidence" value="ECO:0000250"/>
    <property type="project" value="YuBioLab"/>
</dbReference>
<dbReference type="GO" id="GO:0032725">
    <property type="term" value="P:positive regulation of granulocyte macrophage colony-stimulating factor production"/>
    <property type="evidence" value="ECO:0000314"/>
    <property type="project" value="BHF-UCL"/>
</dbReference>
<dbReference type="GO" id="GO:0050729">
    <property type="term" value="P:positive regulation of inflammatory response"/>
    <property type="evidence" value="ECO:0000250"/>
    <property type="project" value="UniProtKB"/>
</dbReference>
<dbReference type="GO" id="GO:0032736">
    <property type="term" value="P:positive regulation of interleukin-13 production"/>
    <property type="evidence" value="ECO:0000304"/>
    <property type="project" value="UniProtKB"/>
</dbReference>
<dbReference type="GO" id="GO:0032740">
    <property type="term" value="P:positive regulation of interleukin-17 production"/>
    <property type="evidence" value="ECO:0000314"/>
    <property type="project" value="BHF-UCL"/>
</dbReference>
<dbReference type="GO" id="GO:0010744">
    <property type="term" value="P:positive regulation of macrophage derived foam cell differentiation"/>
    <property type="evidence" value="ECO:0000250"/>
    <property type="project" value="BHF-UCL"/>
</dbReference>
<dbReference type="GO" id="GO:0032819">
    <property type="term" value="P:positive regulation of natural killer cell proliferation"/>
    <property type="evidence" value="ECO:0000314"/>
    <property type="project" value="BHF-UCL"/>
</dbReference>
<dbReference type="GO" id="GO:0150078">
    <property type="term" value="P:positive regulation of neuroinflammatory response"/>
    <property type="evidence" value="ECO:0000304"/>
    <property type="project" value="ARUK-UCL"/>
</dbReference>
<dbReference type="GO" id="GO:0051092">
    <property type="term" value="P:positive regulation of NF-kappaB transcription factor activity"/>
    <property type="evidence" value="ECO:0000314"/>
    <property type="project" value="UniProtKB"/>
</dbReference>
<dbReference type="GO" id="GO:0051142">
    <property type="term" value="P:positive regulation of NK T cell proliferation"/>
    <property type="evidence" value="ECO:0000314"/>
    <property type="project" value="BHF-UCL"/>
</dbReference>
<dbReference type="GO" id="GO:1901224">
    <property type="term" value="P:positive regulation of non-canonical NF-kappaB signal transduction"/>
    <property type="evidence" value="ECO:0007669"/>
    <property type="project" value="Ensembl"/>
</dbReference>
<dbReference type="GO" id="GO:0051897">
    <property type="term" value="P:positive regulation of phosphatidylinositol 3-kinase/protein kinase B signal transduction"/>
    <property type="evidence" value="ECO:0000314"/>
    <property type="project" value="BHF-UCL"/>
</dbReference>
<dbReference type="GO" id="GO:0048661">
    <property type="term" value="P:positive regulation of smooth muscle cell proliferation"/>
    <property type="evidence" value="ECO:0000314"/>
    <property type="project" value="BHF-UCL"/>
</dbReference>
<dbReference type="GO" id="GO:2000556">
    <property type="term" value="P:positive regulation of T-helper 1 cell cytokine production"/>
    <property type="evidence" value="ECO:0000314"/>
    <property type="project" value="UniProtKB"/>
</dbReference>
<dbReference type="GO" id="GO:0045630">
    <property type="term" value="P:positive regulation of T-helper 2 cell differentiation"/>
    <property type="evidence" value="ECO:0000250"/>
    <property type="project" value="BHF-UCL"/>
</dbReference>
<dbReference type="GO" id="GO:0034105">
    <property type="term" value="P:positive regulation of tissue remodeling"/>
    <property type="evidence" value="ECO:0000305"/>
    <property type="project" value="BHF-UCL"/>
</dbReference>
<dbReference type="GO" id="GO:0045944">
    <property type="term" value="P:positive regulation of transcription by RNA polymerase II"/>
    <property type="evidence" value="ECO:0000314"/>
    <property type="project" value="BHF-UCL"/>
</dbReference>
<dbReference type="GO" id="GO:0032729">
    <property type="term" value="P:positive regulation of type II interferon production"/>
    <property type="evidence" value="ECO:0000314"/>
    <property type="project" value="UniProtKB"/>
</dbReference>
<dbReference type="GO" id="GO:0042531">
    <property type="term" value="P:positive regulation of tyrosine phosphorylation of STAT protein"/>
    <property type="evidence" value="ECO:0000314"/>
    <property type="project" value="CACAO"/>
</dbReference>
<dbReference type="GO" id="GO:0030155">
    <property type="term" value="P:regulation of cell adhesion"/>
    <property type="evidence" value="ECO:0000314"/>
    <property type="project" value="UniProtKB"/>
</dbReference>
<dbReference type="GO" id="GO:0030431">
    <property type="term" value="P:sleep"/>
    <property type="evidence" value="ECO:0000250"/>
    <property type="project" value="UniProtKB"/>
</dbReference>
<dbReference type="GO" id="GO:0042088">
    <property type="term" value="P:T-helper 1 type immune response"/>
    <property type="evidence" value="ECO:0000314"/>
    <property type="project" value="UniProtKB"/>
</dbReference>
<dbReference type="GO" id="GO:0070328">
    <property type="term" value="P:triglyceride homeostasis"/>
    <property type="evidence" value="ECO:0000250"/>
    <property type="project" value="BHF-UCL"/>
</dbReference>
<dbReference type="GO" id="GO:0042092">
    <property type="term" value="P:type 2 immune response"/>
    <property type="evidence" value="ECO:0000304"/>
    <property type="project" value="UniProtKB"/>
</dbReference>
<dbReference type="CDD" id="cd23298">
    <property type="entry name" value="beta-trefoil_IL18"/>
    <property type="match status" value="1"/>
</dbReference>
<dbReference type="FunFam" id="2.80.10.50:FF:000043">
    <property type="entry name" value="Interleukin-18"/>
    <property type="match status" value="1"/>
</dbReference>
<dbReference type="Gene3D" id="2.80.10.50">
    <property type="match status" value="1"/>
</dbReference>
<dbReference type="InterPro" id="IPR015529">
    <property type="entry name" value="IL-18"/>
</dbReference>
<dbReference type="InterPro" id="IPR000975">
    <property type="entry name" value="IL-1_fam"/>
</dbReference>
<dbReference type="InterPro" id="IPR008996">
    <property type="entry name" value="IL1/FGF"/>
</dbReference>
<dbReference type="PANTHER" id="PTHR10078">
    <property type="entry name" value="INTERLEUKIN-1 FAMILY MEMBER"/>
    <property type="match status" value="1"/>
</dbReference>
<dbReference type="PANTHER" id="PTHR10078:SF35">
    <property type="entry name" value="INTERLEUKIN-18"/>
    <property type="match status" value="1"/>
</dbReference>
<dbReference type="Pfam" id="PF00340">
    <property type="entry name" value="IL1"/>
    <property type="match status" value="1"/>
</dbReference>
<dbReference type="PIRSF" id="PIRSF015162">
    <property type="entry name" value="Interleukin_18"/>
    <property type="match status" value="1"/>
</dbReference>
<dbReference type="PRINTS" id="PR01933">
    <property type="entry name" value="INTRLEUKIN18"/>
</dbReference>
<dbReference type="SUPFAM" id="SSF50353">
    <property type="entry name" value="Cytokine"/>
    <property type="match status" value="1"/>
</dbReference>
<keyword id="KW-0002">3D-structure</keyword>
<keyword id="KW-0025">Alternative splicing</keyword>
<keyword id="KW-0202">Cytokine</keyword>
<keyword id="KW-0963">Cytoplasm</keyword>
<keyword id="KW-0903">Direct protein sequencing</keyword>
<keyword id="KW-0395">Inflammatory response</keyword>
<keyword id="KW-1267">Proteomics identification</keyword>
<keyword id="KW-1185">Reference proteome</keyword>
<keyword id="KW-0964">Secreted</keyword>
<proteinExistence type="evidence at protein level"/>
<gene>
    <name evidence="17" type="primary">IL18</name>
    <name type="synonym">IGIF</name>
    <name type="synonym">IL1F4</name>
</gene>
<reference key="1">
    <citation type="journal article" date="1996" name="J. Immunol.">
        <title>Cloning of the cDNA for human IFN-gamma-inducing factor, expression in Escherichia coli, and studies on the biologic activities of the protein.</title>
        <authorList>
            <person name="Ushio S."/>
            <person name="Namba M."/>
            <person name="Okura T."/>
            <person name="Hattori K."/>
            <person name="Nukada Y."/>
            <person name="Akita K."/>
            <person name="Tanabe F."/>
            <person name="Konishi K."/>
            <person name="Micallef M."/>
            <person name="Fujii M."/>
            <person name="Torigoe K."/>
            <person name="Tanimoto T."/>
            <person name="Fukuda S."/>
            <person name="Ikeda M."/>
            <person name="Okamura H."/>
            <person name="Kurimoto M."/>
        </authorList>
    </citation>
    <scope>NUCLEOTIDE SEQUENCE [MRNA] (ISOFORM 1)</scope>
    <source>
        <tissue>Liver</tissue>
    </source>
</reference>
<reference key="2">
    <citation type="journal article" date="2004" name="Oncogene">
        <title>A novel isoform of pro-interleukin-18 expressed in ovarian tumors is resistant to caspase-1 and -4 processing.</title>
        <authorList>
            <person name="Gaggero A."/>
            <person name="De Ambrosis A."/>
            <person name="Mezzanzanica D."/>
            <person name="Piazza T."/>
            <person name="Rubartelli A."/>
            <person name="Figini M."/>
            <person name="Canevari S."/>
            <person name="Ferrini S."/>
        </authorList>
    </citation>
    <scope>NUCLEOTIDE SEQUENCE [MRNA] (ISOFORM 2)</scope>
    <scope>PROTEOLYTIC CLEAVAGE</scope>
    <scope>ALTERNATIVE SPLICING</scope>
    <scope>TISSUE SPECIFICITY (ISOFORM 2)</scope>
</reference>
<reference key="3">
    <citation type="submission" date="1998-07" db="EMBL/GenBank/DDBJ databases">
        <title>Cloning and sequencing of the cDNA for precursor hIL-18.</title>
        <authorList>
            <person name="Yong D."/>
            <person name="Guixin D."/>
            <person name="Lihua H."/>
            <person name="Haitao W."/>
        </authorList>
    </citation>
    <scope>NUCLEOTIDE SEQUENCE [MRNA] (ISOFORM 1)</scope>
</reference>
<reference key="4">
    <citation type="submission" date="2001-07" db="EMBL/GenBank/DDBJ databases">
        <title>Cloning of human interleukin 18 cDNA.</title>
        <authorList>
            <person name="Liu J."/>
            <person name="Peng X."/>
            <person name="Yuan J."/>
            <person name="Qiang B."/>
        </authorList>
    </citation>
    <scope>NUCLEOTIDE SEQUENCE [MRNA] (ISOFORM 1)</scope>
</reference>
<reference key="5">
    <citation type="submission" date="2004-06" db="EMBL/GenBank/DDBJ databases">
        <title>Cloning of human full open reading frames in Gateway(TM) system entry vector (pDONR201).</title>
        <authorList>
            <person name="Ebert L."/>
            <person name="Schick M."/>
            <person name="Neubert P."/>
            <person name="Schatten R."/>
            <person name="Henze S."/>
            <person name="Korn B."/>
        </authorList>
    </citation>
    <scope>NUCLEOTIDE SEQUENCE [LARGE SCALE MRNA] (ISOFORM 1)</scope>
</reference>
<reference key="6">
    <citation type="journal article" date="2006" name="Nature">
        <title>Human chromosome 11 DNA sequence and analysis including novel gene identification.</title>
        <authorList>
            <person name="Taylor T.D."/>
            <person name="Noguchi H."/>
            <person name="Totoki Y."/>
            <person name="Toyoda A."/>
            <person name="Kuroki Y."/>
            <person name="Dewar K."/>
            <person name="Lloyd C."/>
            <person name="Itoh T."/>
            <person name="Takeda T."/>
            <person name="Kim D.-W."/>
            <person name="She X."/>
            <person name="Barlow K.F."/>
            <person name="Bloom T."/>
            <person name="Bruford E."/>
            <person name="Chang J.L."/>
            <person name="Cuomo C.A."/>
            <person name="Eichler E."/>
            <person name="FitzGerald M.G."/>
            <person name="Jaffe D.B."/>
            <person name="LaButti K."/>
            <person name="Nicol R."/>
            <person name="Park H.-S."/>
            <person name="Seaman C."/>
            <person name="Sougnez C."/>
            <person name="Yang X."/>
            <person name="Zimmer A.R."/>
            <person name="Zody M.C."/>
            <person name="Birren B.W."/>
            <person name="Nusbaum C."/>
            <person name="Fujiyama A."/>
            <person name="Hattori M."/>
            <person name="Rogers J."/>
            <person name="Lander E.S."/>
            <person name="Sakaki Y."/>
        </authorList>
    </citation>
    <scope>NUCLEOTIDE SEQUENCE [LARGE SCALE GENOMIC DNA]</scope>
</reference>
<reference key="7">
    <citation type="submission" date="2005-07" db="EMBL/GenBank/DDBJ databases">
        <authorList>
            <person name="Mural R.J."/>
            <person name="Istrail S."/>
            <person name="Sutton G."/>
            <person name="Florea L."/>
            <person name="Halpern A.L."/>
            <person name="Mobarry C.M."/>
            <person name="Lippert R."/>
            <person name="Walenz B."/>
            <person name="Shatkay H."/>
            <person name="Dew I."/>
            <person name="Miller J.R."/>
            <person name="Flanigan M.J."/>
            <person name="Edwards N.J."/>
            <person name="Bolanos R."/>
            <person name="Fasulo D."/>
            <person name="Halldorsson B.V."/>
            <person name="Hannenhalli S."/>
            <person name="Turner R."/>
            <person name="Yooseph S."/>
            <person name="Lu F."/>
            <person name="Nusskern D.R."/>
            <person name="Shue B.C."/>
            <person name="Zheng X.H."/>
            <person name="Zhong F."/>
            <person name="Delcher A.L."/>
            <person name="Huson D.H."/>
            <person name="Kravitz S.A."/>
            <person name="Mouchard L."/>
            <person name="Reinert K."/>
            <person name="Remington K.A."/>
            <person name="Clark A.G."/>
            <person name="Waterman M.S."/>
            <person name="Eichler E.E."/>
            <person name="Adams M.D."/>
            <person name="Hunkapiller M.W."/>
            <person name="Myers E.W."/>
            <person name="Venter J.C."/>
        </authorList>
    </citation>
    <scope>NUCLEOTIDE SEQUENCE [LARGE SCALE GENOMIC DNA]</scope>
</reference>
<reference key="8">
    <citation type="journal article" date="2004" name="Genome Res.">
        <title>The status, quality, and expansion of the NIH full-length cDNA project: the Mammalian Gene Collection (MGC).</title>
        <authorList>
            <consortium name="The MGC Project Team"/>
        </authorList>
    </citation>
    <scope>NUCLEOTIDE SEQUENCE [LARGE SCALE MRNA] (ISOFORM 1)</scope>
    <source>
        <tissue>Urinary bladder</tissue>
    </source>
</reference>
<reference key="9">
    <citation type="submission" date="1997-02" db="EMBL/GenBank/DDBJ databases">
        <authorList>
            <person name="Conti B."/>
            <person name="Kim S.J."/>
            <person name="Tinti C."/>
            <person name="Chun H.S."/>
            <person name="Joh T.H."/>
        </authorList>
    </citation>
    <scope>NUCLEOTIDE SEQUENCE [MRNA] OF 2-193 (ISOFORM 1)</scope>
    <source>
        <tissue>Peripheral blood</tissue>
    </source>
</reference>
<reference key="10">
    <citation type="journal article" date="1997" name="J. Biol. Chem.">
        <title>Involvement of caspase-1 and caspase-3 in the production and processing of mature human interleukin 18 in monocytic THP.1 cells.</title>
        <authorList>
            <person name="Akita K."/>
            <person name="Ohtsuki T."/>
            <person name="Nukada Y."/>
            <person name="Tanimoto T."/>
            <person name="Namba M."/>
            <person name="Okura T."/>
            <person name="Takakura-Yamamoto R."/>
            <person name="Torigoe K."/>
            <person name="Gu Y."/>
            <person name="Su M.S."/>
            <person name="Fujii M."/>
            <person name="Satoh-Itoh M."/>
            <person name="Yamamoto K."/>
            <person name="Kohno K."/>
            <person name="Ikeda M."/>
            <person name="Kurimoto M."/>
        </authorList>
    </citation>
    <scope>PARTIAL PROTEIN SEQUENCE</scope>
    <scope>SUBCELLULAR LOCATION</scope>
    <scope>PROTEOLYTIC CLEAVAGE</scope>
</reference>
<reference key="11">
    <citation type="journal article" date="2000" name="Int. Immunol.">
        <title>IL-12 synergizes with IL-18 or IL-1beta for IFN-gamma production from human T cells.</title>
        <authorList>
            <person name="Tominaga K."/>
            <person name="Yoshimoto T."/>
            <person name="Torigoe K."/>
            <person name="Kurimoto M."/>
            <person name="Matsui K."/>
            <person name="Hada T."/>
            <person name="Okamura H."/>
            <person name="Nakanishi K."/>
        </authorList>
    </citation>
    <scope>FUNCTION</scope>
</reference>
<reference key="12">
    <citation type="journal article" date="2011" name="BMC Syst. Biol.">
        <title>Initial characterization of the human central proteome.</title>
        <authorList>
            <person name="Burkard T.R."/>
            <person name="Planyavsky M."/>
            <person name="Kaupe I."/>
            <person name="Breitwieser F.P."/>
            <person name="Buerckstuemmer T."/>
            <person name="Bennett K.L."/>
            <person name="Superti-Furga G."/>
            <person name="Colinge J."/>
        </authorList>
    </citation>
    <scope>IDENTIFICATION BY MASS SPECTROMETRY [LARGE SCALE ANALYSIS]</scope>
</reference>
<reference key="13">
    <citation type="journal article" date="2013" name="Nat. Med.">
        <title>Activation of the Nlrp3 inflammasome in infiltrating macrophages by endocannabinoids mediates beta cell loss in type 2 diabetes.</title>
        <authorList>
            <person name="Jourdan T."/>
            <person name="Godlewski G."/>
            <person name="Cinar R."/>
            <person name="Bertola A."/>
            <person name="Szanda G."/>
            <person name="Liu J."/>
            <person name="Tam J."/>
            <person name="Han T."/>
            <person name="Mukhopadhyay B."/>
            <person name="Skarulis M.C."/>
            <person name="Ju C."/>
            <person name="Aouadi M."/>
            <person name="Czech M.P."/>
            <person name="Kunos G."/>
        </authorList>
    </citation>
    <scope>INDUCTION BY ENDOCANNABINOID ANANDAMIDE</scope>
    <scope>SUBCELLULAR LOCATION</scope>
</reference>
<reference key="14">
    <citation type="journal article" date="2003" name="Nat. Struct. Biol.">
        <title>The structure and binding mode of interleukin-18.</title>
        <authorList>
            <person name="Kato Z."/>
            <person name="Jee J."/>
            <person name="Shikano H."/>
            <person name="Mishima M."/>
            <person name="Ohki I."/>
            <person name="Ohnishi H."/>
            <person name="Li A."/>
            <person name="Hashimoto K."/>
            <person name="Matsukuma E."/>
            <person name="Omoya K."/>
            <person name="Yamamoto Y."/>
            <person name="Yoneda T."/>
            <person name="Hara T."/>
            <person name="Kondo N."/>
            <person name="Shirakawa M."/>
        </authorList>
    </citation>
    <scope>STRUCTURE BY NMR OF 37-193</scope>
    <scope>FUNCTION</scope>
    <scope>SUBUNIT</scope>
    <scope>MUTAGENESIS OF LYS-40; LEU-41; LYS-44; ARG-49; ASP-53; MET-69; ASP-71; ARG-94; MET-96; LYS-115; LYS-120; ASP-134; ARG-140 AND ASP-168</scope>
</reference>
<reference key="15">
    <citation type="journal article" date="2020" name="Cell">
        <title>A Translocation Pathway for Vesicle-Mediated Unconventional Protein Secretion.</title>
        <authorList>
            <person name="Zhang M."/>
            <person name="Liu L."/>
            <person name="Lin X."/>
            <person name="Wang Y."/>
            <person name="Li Y."/>
            <person name="Guo Q."/>
            <person name="Li S."/>
            <person name="Sun Y."/>
            <person name="Tao X."/>
            <person name="Zhang D."/>
            <person name="Lv X."/>
            <person name="Zheng L."/>
            <person name="Ge L."/>
        </authorList>
    </citation>
    <scope>SUBCELLULAR LOCATION</scope>
    <scope>INTERACTION WITH TMED10</scope>
</reference>
<reference key="16">
    <citation type="journal article" date="2021" name="Nature">
        <title>Gasdermin D pore structure reveals preferential release of mature interleukin-1.</title>
        <authorList>
            <person name="Xia S."/>
            <person name="Zhang Z."/>
            <person name="Magupalli V.G."/>
            <person name="Pablo J.L."/>
            <person name="Dong Y."/>
            <person name="Vora S.M."/>
            <person name="Wang L."/>
            <person name="Fu T.M."/>
            <person name="Jacobson M.P."/>
            <person name="Greka A."/>
            <person name="Lieberman J."/>
            <person name="Ruan J."/>
            <person name="Wu H."/>
        </authorList>
    </citation>
    <scope>FUNCTION</scope>
    <scope>SUBCELLULAR LOCATION</scope>
</reference>
<reference key="17">
    <citation type="journal article" date="2014" name="FEBS Lett.">
        <title>Structural basis for the specific recognition of IL-18 by its alpha receptor.</title>
        <authorList>
            <person name="Wei H."/>
            <person name="Wang D."/>
            <person name="Qian Y."/>
            <person name="Liu X."/>
            <person name="Fan S."/>
            <person name="Yin H.S."/>
            <person name="Wang X."/>
        </authorList>
    </citation>
    <scope>X-RAY CRYSTALLOGRAPHY (2.80 ANGSTROMS) OF 37-193</scope>
    <scope>PROTEOLYTIC CLEAVAGE</scope>
    <scope>SUBUNIT</scope>
</reference>
<reference key="18">
    <citation type="journal article" date="2014" name="Nat. Commun.">
        <title>The structural basis for receptor recognition of human interleukin-18.</title>
        <authorList>
            <person name="Tsutsumi N."/>
            <person name="Kimura T."/>
            <person name="Arita K."/>
            <person name="Ariyoshi M."/>
            <person name="Ohnishi H."/>
            <person name="Yamamoto T."/>
            <person name="Zuo X."/>
            <person name="Maenaka K."/>
            <person name="Park E.Y."/>
            <person name="Kondo N."/>
            <person name="Shirakawa M."/>
            <person name="Tochio H."/>
            <person name="Kato Z."/>
        </authorList>
    </citation>
    <scope>X-RAY CRYSTALLOGRAPHY (2.33 ANGSTROMS) OF 37-193</scope>
    <scope>FUNCTION</scope>
    <scope>MUTAGENESIS OF GLY-144; HIS-145; ASP-146; LYS-148; ARG-183 AND MET-186</scope>
    <scope>SUBUNIT</scope>
</reference>
<reference evidence="19" key="19">
    <citation type="journal article" date="2023" name="Nature">
        <title>Structural insights into cytokine cleavage by inflammatory caspase-4.</title>
        <authorList>
            <person name="Devant P."/>
            <person name="Dong Y."/>
            <person name="Mintseris J."/>
            <person name="Ma W."/>
            <person name="Gygi S.P."/>
            <person name="Wu H."/>
            <person name="Kagan J.C."/>
        </authorList>
    </citation>
    <scope>STRUCTURE BY ELECTRON MICROSCOPY (3.2 ANGSTROMS) IN COMPLEX WITH CASP4</scope>
    <scope>SUBCELLULAR LOCATION</scope>
    <scope>PROTEOLYTIC CLEAVAGE</scope>
    <scope>MUTAGENESIS OF 33-LEU--SER-35; 47-VAL-ILE-48 AND 192-GLU-ASP-193</scope>
</reference>
<reference evidence="18" key="20">
    <citation type="journal article" date="2023" name="Nature">
        <title>Recognition and maturation of IL-18 by caspase-4 noncanonical inflammasome.</title>
        <authorList>
            <person name="Shi X."/>
            <person name="Sun Q."/>
            <person name="Hou Y."/>
            <person name="Zeng H."/>
            <person name="Cao Y."/>
            <person name="Dong M."/>
            <person name="Ding J."/>
            <person name="Shao F."/>
        </authorList>
    </citation>
    <scope>X-RAY CRYSTALLOGRAPHY (3.12 ANGSTROMS) OF 6-193 IN COMPLEX WITH CASP4 AND S.FLEXNERI OSPC3</scope>
    <scope>FUNCTION</scope>
    <scope>SUBCELLULAR LOCATION</scope>
    <scope>PROTEOLYTIC CLEAVAGE</scope>
    <scope>MUTAGENESIS OF ASN-12; GLU-28; 33-LEU--SER-35; ASP-36; 37-TYR-PHE-38; PHE-38; 70-THR--ASN-77 AND ASP-71</scope>
</reference>
<comment type="function">
    <text evidence="1 2 6 8 10">Pro-inflammatory cytokine primarily involved in epithelial barrier repair, polarized T-helper 1 (Th1) cell and natural killer (NK) cell immune responses (PubMed:10653850). Upon binding to IL18R1 and IL18RAP, forms a signaling ternary complex which activates NF-kappa-B, triggering synthesis of inflammatory mediators (PubMed:14528293, PubMed:25500532, PubMed:37993714). Synergizes with IL12/interleukin-12 to induce IFNG synthesis from T-helper 1 (Th1) cells and natural killer (NK) cells (PubMed:10653850). Involved in transduction of inflammation downstream of pyroptosis: its mature form is specifically released in the extracellular milieu by passing through the gasdermin-D (GSDMD) pore (PubMed:33883744).</text>
</comment>
<comment type="subunit">
    <text evidence="2 5 6 7 10">Forms a ternary complex with ligand-binding receptor subunit IL18R1 and signaling receptor subunit IL18RAP at the plasma membrane (PubMed:14528293, PubMed:25261253, PubMed:25500532, PubMed:37993714). Mature IL18 first binds to IL18R1 forming a low affinity binary complex, which then interacts with IL18RAP to form a high affinity ternary complex that signals inside the cell (PubMed:14528293, PubMed:25261253, PubMed:25500532). Interacts with cargo receptor TMED10; the interaction mediates the translocation from the cytoplasm into the ERGIC (endoplasmic reticulum-Golgi intermediate compartment) and thereby secretion (PubMed:32272059).</text>
</comment>
<comment type="interaction">
    <interactant intactId="EBI-3910835">
        <id>Q14116</id>
    </interactant>
    <interactant intactId="EBI-7162516">
        <id>Q15847</id>
        <label>ADIRF</label>
    </interactant>
    <organismsDiffer>false</organismsDiffer>
    <experiments>3</experiments>
</comment>
<comment type="interaction">
    <interactant intactId="EBI-3910835">
        <id>Q14116</id>
    </interactant>
    <interactant intactId="EBI-9817499">
        <id>Q13478</id>
        <label>IL18R1</label>
    </interactant>
    <organismsDiffer>false</organismsDiffer>
    <experiments>2</experiments>
</comment>
<comment type="interaction">
    <interactant intactId="EBI-3910835">
        <id>Q14116</id>
    </interactant>
    <interactant intactId="EBI-1055490">
        <id>P48594</id>
        <label>SERPINB4</label>
    </interactant>
    <organismsDiffer>false</organismsDiffer>
    <experiments>2</experiments>
</comment>
<comment type="interaction">
    <interactant intactId="EBI-3910835">
        <id>Q14116</id>
    </interactant>
    <interactant intactId="EBI-15748155">
        <id>Q9IW12</id>
    </interactant>
    <organismsDiffer>true</organismsDiffer>
    <experiments>2</experiments>
</comment>
<comment type="subcellular location">
    <subcellularLocation>
        <location evidence="7 8 11">Cytoplasm</location>
        <location evidence="7 8 11">Cytosol</location>
    </subcellularLocation>
    <subcellularLocation>
        <location evidence="4 7 8 9 10">Secreted</location>
    </subcellularLocation>
    <text evidence="7 8 9 10">The precursor is cytosolic (PubMed:33883744). In response to inflammasome-activating signals, cleaved and secreted (PubMed:33883744, PubMed:37993712, PubMed:37993714). Mature form is secreted and released in the extracellular milieu by passing through the gasdermin-D (GSDMD) pore (PubMed:33883744, PubMed:37993714). In contrast, the precursor form is not released, due to the presence of an acidic region that is proteolytically removed by CASP1, CASP4 or CASP5 during maturation (PubMed:33883744, PubMed:37993714). The secretion is dependent on protein unfolding and facilitated by the cargo receptor TMED10 (PubMed:32272059).</text>
</comment>
<comment type="alternative products">
    <event type="alternative splicing"/>
    <isoform>
        <id>Q14116-1</id>
        <name>1</name>
        <sequence type="displayed"/>
    </isoform>
    <isoform>
        <id>Q14116-2</id>
        <name>2</name>
        <name>Delta3pro-IL-18</name>
        <sequence type="described" ref="VSP_044934"/>
    </isoform>
</comment>
<comment type="tissue specificity">
    <molecule>Isoform 2</molecule>
    <text evidence="3">Expressed in ovarian carcinoma but undetectable in normal ovarian epithelial cells. Resistant to proteolytic activation by caspase-1 and -4.</text>
</comment>
<comment type="induction">
    <text evidence="4">In macrophages, release is increased by endocannabinoid anandamide/AEA.</text>
</comment>
<comment type="PTM">
    <text evidence="3 5 8 9 10 11">The pro-IL-18 precursor is processed by CASP1, CASP4 or CASP5 to yield its mature, active form (PubMed:15326478, PubMed:25261253, PubMed:37993712, PubMed:37993714, PubMed:9334240). The pro-IL-18 precursor features autoinhibitory interactions between the propeptide and the post-cleavage-site region, preventing recognition by the IL18R1 receptor (PubMed:37993714). Processing by CASP1, CASP4 or CASP5 induces conformational changes to generate critical receptor-binding sites (PubMed:37993714). The mature form is then secreted and released in the extracellular milieu by passing through the gasdermin-D (GSDMD) pore (PubMed:33883744, PubMed:37993714). In contrast, cleavage by CASP3 inactivates IL18 (PubMed:37993714, PubMed:9334240).</text>
</comment>
<comment type="similarity">
    <text evidence="16">Belongs to the IL-1 family.</text>
</comment>
<comment type="online information" name="Wikipedia">
    <link uri="https://en.wikipedia.org/wiki/Interleukin_1"/>
    <text>Interleukin-1 entry</text>
</comment>
<name>IL18_HUMAN</name>
<evidence type="ECO:0000269" key="1">
    <source>
    </source>
</evidence>
<evidence type="ECO:0000269" key="2">
    <source>
    </source>
</evidence>
<evidence type="ECO:0000269" key="3">
    <source>
    </source>
</evidence>
<evidence type="ECO:0000269" key="4">
    <source>
    </source>
</evidence>
<evidence type="ECO:0000269" key="5">
    <source>
    </source>
</evidence>
<evidence type="ECO:0000269" key="6">
    <source>
    </source>
</evidence>
<evidence type="ECO:0000269" key="7">
    <source>
    </source>
</evidence>
<evidence type="ECO:0000269" key="8">
    <source>
    </source>
</evidence>
<evidence type="ECO:0000269" key="9">
    <source>
    </source>
</evidence>
<evidence type="ECO:0000269" key="10">
    <source>
    </source>
</evidence>
<evidence type="ECO:0000269" key="11">
    <source>
    </source>
</evidence>
<evidence type="ECO:0000303" key="12">
    <source>
    </source>
</evidence>
<evidence type="ECO:0000303" key="13">
    <source>
    </source>
</evidence>
<evidence type="ECO:0000303" key="14">
    <source>
    </source>
</evidence>
<evidence type="ECO:0000303" key="15">
    <source>
    </source>
</evidence>
<evidence type="ECO:0000305" key="16"/>
<evidence type="ECO:0000312" key="17">
    <source>
        <dbReference type="HGNC" id="HGNC:5986"/>
    </source>
</evidence>
<evidence type="ECO:0007744" key="18">
    <source>
        <dbReference type="PDB" id="8J6K"/>
    </source>
</evidence>
<evidence type="ECO:0007744" key="19">
    <source>
        <dbReference type="PDB" id="8SPB"/>
    </source>
</evidence>
<evidence type="ECO:0007829" key="20">
    <source>
        <dbReference type="PDB" id="2VXT"/>
    </source>
</evidence>
<evidence type="ECO:0007829" key="21">
    <source>
        <dbReference type="PDB" id="4HJJ"/>
    </source>
</evidence>
<evidence type="ECO:0007829" key="22">
    <source>
        <dbReference type="PDB" id="8SPB"/>
    </source>
</evidence>